<dbReference type="EMBL" id="CP000679">
    <property type="protein sequence ID" value="ABP67852.1"/>
    <property type="molecule type" value="Genomic_DNA"/>
</dbReference>
<dbReference type="RefSeq" id="WP_011917778.1">
    <property type="nucleotide sequence ID" value="NC_009437.1"/>
</dbReference>
<dbReference type="SMR" id="A4XLR7"/>
<dbReference type="STRING" id="351627.Csac_2274"/>
<dbReference type="KEGG" id="csc:Csac_2274"/>
<dbReference type="eggNOG" id="COG0199">
    <property type="taxonomic scope" value="Bacteria"/>
</dbReference>
<dbReference type="HOGENOM" id="CLU_139869_3_0_9"/>
<dbReference type="OrthoDB" id="9810484at2"/>
<dbReference type="Proteomes" id="UP000000256">
    <property type="component" value="Chromosome"/>
</dbReference>
<dbReference type="GO" id="GO:0005737">
    <property type="term" value="C:cytoplasm"/>
    <property type="evidence" value="ECO:0007669"/>
    <property type="project" value="UniProtKB-ARBA"/>
</dbReference>
<dbReference type="GO" id="GO:0015935">
    <property type="term" value="C:small ribosomal subunit"/>
    <property type="evidence" value="ECO:0007669"/>
    <property type="project" value="TreeGrafter"/>
</dbReference>
<dbReference type="GO" id="GO:0019843">
    <property type="term" value="F:rRNA binding"/>
    <property type="evidence" value="ECO:0007669"/>
    <property type="project" value="UniProtKB-UniRule"/>
</dbReference>
<dbReference type="GO" id="GO:0003735">
    <property type="term" value="F:structural constituent of ribosome"/>
    <property type="evidence" value="ECO:0007669"/>
    <property type="project" value="InterPro"/>
</dbReference>
<dbReference type="GO" id="GO:0008270">
    <property type="term" value="F:zinc ion binding"/>
    <property type="evidence" value="ECO:0007669"/>
    <property type="project" value="UniProtKB-UniRule"/>
</dbReference>
<dbReference type="GO" id="GO:0006412">
    <property type="term" value="P:translation"/>
    <property type="evidence" value="ECO:0007669"/>
    <property type="project" value="UniProtKB-UniRule"/>
</dbReference>
<dbReference type="FunFam" id="4.10.830.10:FF:000001">
    <property type="entry name" value="30S ribosomal protein S14 type Z"/>
    <property type="match status" value="1"/>
</dbReference>
<dbReference type="Gene3D" id="4.10.830.10">
    <property type="entry name" value="30s Ribosomal Protein S14, Chain N"/>
    <property type="match status" value="1"/>
</dbReference>
<dbReference type="HAMAP" id="MF_01364_B">
    <property type="entry name" value="Ribosomal_uS14_2_B"/>
    <property type="match status" value="1"/>
</dbReference>
<dbReference type="InterPro" id="IPR001209">
    <property type="entry name" value="Ribosomal_uS14"/>
</dbReference>
<dbReference type="InterPro" id="IPR023053">
    <property type="entry name" value="Ribosomal_uS14_bact"/>
</dbReference>
<dbReference type="InterPro" id="IPR018271">
    <property type="entry name" value="Ribosomal_uS14_CS"/>
</dbReference>
<dbReference type="InterPro" id="IPR043140">
    <property type="entry name" value="Ribosomal_uS14_sf"/>
</dbReference>
<dbReference type="NCBIfam" id="NF005974">
    <property type="entry name" value="PRK08061.1"/>
    <property type="match status" value="1"/>
</dbReference>
<dbReference type="PANTHER" id="PTHR19836">
    <property type="entry name" value="30S RIBOSOMAL PROTEIN S14"/>
    <property type="match status" value="1"/>
</dbReference>
<dbReference type="PANTHER" id="PTHR19836:SF19">
    <property type="entry name" value="SMALL RIBOSOMAL SUBUNIT PROTEIN US14M"/>
    <property type="match status" value="1"/>
</dbReference>
<dbReference type="Pfam" id="PF00253">
    <property type="entry name" value="Ribosomal_S14"/>
    <property type="match status" value="1"/>
</dbReference>
<dbReference type="SUPFAM" id="SSF57716">
    <property type="entry name" value="Glucocorticoid receptor-like (DNA-binding domain)"/>
    <property type="match status" value="1"/>
</dbReference>
<dbReference type="PROSITE" id="PS00527">
    <property type="entry name" value="RIBOSOMAL_S14"/>
    <property type="match status" value="1"/>
</dbReference>
<proteinExistence type="inferred from homology"/>
<organism>
    <name type="scientific">Caldicellulosiruptor saccharolyticus (strain ATCC 43494 / DSM 8903 / Tp8T 6331)</name>
    <dbReference type="NCBI Taxonomy" id="351627"/>
    <lineage>
        <taxon>Bacteria</taxon>
        <taxon>Bacillati</taxon>
        <taxon>Bacillota</taxon>
        <taxon>Bacillota incertae sedis</taxon>
        <taxon>Caldicellulosiruptorales</taxon>
        <taxon>Caldicellulosiruptoraceae</taxon>
        <taxon>Caldicellulosiruptor</taxon>
    </lineage>
</organism>
<keyword id="KW-0479">Metal-binding</keyword>
<keyword id="KW-0687">Ribonucleoprotein</keyword>
<keyword id="KW-0689">Ribosomal protein</keyword>
<keyword id="KW-0694">RNA-binding</keyword>
<keyword id="KW-0699">rRNA-binding</keyword>
<keyword id="KW-0862">Zinc</keyword>
<reference key="1">
    <citation type="submission" date="2007-04" db="EMBL/GenBank/DDBJ databases">
        <title>Genome sequence of the thermophilic hydrogen-producing bacterium Caldicellulosiruptor saccharolyticus DSM 8903.</title>
        <authorList>
            <person name="Copeland A."/>
            <person name="Lucas S."/>
            <person name="Lapidus A."/>
            <person name="Barry K."/>
            <person name="Detter J.C."/>
            <person name="Glavina del Rio T."/>
            <person name="Hammon N."/>
            <person name="Israni S."/>
            <person name="Dalin E."/>
            <person name="Tice H."/>
            <person name="Pitluck S."/>
            <person name="Kiss H."/>
            <person name="Brettin T."/>
            <person name="Bruce D."/>
            <person name="Han C."/>
            <person name="Schmutz J."/>
            <person name="Larimer F."/>
            <person name="Land M."/>
            <person name="Hauser L."/>
            <person name="Kyrpides N."/>
            <person name="Lykidis A."/>
            <person name="van de Werken H.J.G."/>
            <person name="Verhaart M.R.A."/>
            <person name="VanFossen A.L."/>
            <person name="Lewis D.L."/>
            <person name="Nichols J.D."/>
            <person name="Goorissen H.P."/>
            <person name="van Niel E.W.J."/>
            <person name="Stams F.J.M."/>
            <person name="Willquist K.U."/>
            <person name="Ward D.E."/>
            <person name="van der Oost J."/>
            <person name="Kelly R.M."/>
            <person name="Kengen S.M.W."/>
            <person name="Richardson P."/>
        </authorList>
    </citation>
    <scope>NUCLEOTIDE SEQUENCE [LARGE SCALE GENOMIC DNA]</scope>
    <source>
        <strain>ATCC 43494 / DSM 8903 / Tp8T 6331</strain>
    </source>
</reference>
<evidence type="ECO:0000255" key="1">
    <source>
        <dbReference type="HAMAP-Rule" id="MF_01364"/>
    </source>
</evidence>
<evidence type="ECO:0000305" key="2"/>
<name>RS14Z_CALS8</name>
<accession>A4XLR7</accession>
<gene>
    <name evidence="1" type="primary">rpsZ</name>
    <name evidence="1" type="synonym">rpsN</name>
    <name type="ordered locus">Csac_2274</name>
</gene>
<feature type="chain" id="PRO_1000067928" description="Small ribosomal subunit protein uS14">
    <location>
        <begin position="1"/>
        <end position="61"/>
    </location>
</feature>
<feature type="binding site" evidence="1">
    <location>
        <position position="24"/>
    </location>
    <ligand>
        <name>Zn(2+)</name>
        <dbReference type="ChEBI" id="CHEBI:29105"/>
    </ligand>
</feature>
<feature type="binding site" evidence="1">
    <location>
        <position position="27"/>
    </location>
    <ligand>
        <name>Zn(2+)</name>
        <dbReference type="ChEBI" id="CHEBI:29105"/>
    </ligand>
</feature>
<feature type="binding site" evidence="1">
    <location>
        <position position="40"/>
    </location>
    <ligand>
        <name>Zn(2+)</name>
        <dbReference type="ChEBI" id="CHEBI:29105"/>
    </ligand>
</feature>
<feature type="binding site" evidence="1">
    <location>
        <position position="43"/>
    </location>
    <ligand>
        <name>Zn(2+)</name>
        <dbReference type="ChEBI" id="CHEBI:29105"/>
    </ligand>
</feature>
<sequence length="61" mass="7243">MARKALIIKQQRPQKFSTRYYNRCKICGRPRAYLRKFGVCRLCFRKLAHNGEIPGVKKASW</sequence>
<comment type="function">
    <text evidence="1">Binds 16S rRNA, required for the assembly of 30S particles and may also be responsible for determining the conformation of the 16S rRNA at the A site.</text>
</comment>
<comment type="cofactor">
    <cofactor evidence="1">
        <name>Zn(2+)</name>
        <dbReference type="ChEBI" id="CHEBI:29105"/>
    </cofactor>
    <text evidence="1">Binds 1 zinc ion per subunit.</text>
</comment>
<comment type="subunit">
    <text evidence="1">Part of the 30S ribosomal subunit. Contacts proteins S3 and S10.</text>
</comment>
<comment type="similarity">
    <text evidence="1">Belongs to the universal ribosomal protein uS14 family. Zinc-binding uS14 subfamily.</text>
</comment>
<protein>
    <recommendedName>
        <fullName evidence="1">Small ribosomal subunit protein uS14</fullName>
    </recommendedName>
    <alternativeName>
        <fullName evidence="2">30S ribosomal protein S14 type Z</fullName>
    </alternativeName>
</protein>